<protein>
    <recommendedName>
        <fullName evidence="1">Small ribosomal subunit protein uS10</fullName>
    </recommendedName>
    <alternativeName>
        <fullName evidence="2">30S ribosomal protein S10</fullName>
    </alternativeName>
</protein>
<dbReference type="EMBL" id="CP000463">
    <property type="protein sequence ID" value="ABJ07517.1"/>
    <property type="molecule type" value="Genomic_DNA"/>
</dbReference>
<dbReference type="SMR" id="Q07KL7"/>
<dbReference type="STRING" id="316055.RPE_3587"/>
<dbReference type="KEGG" id="rpe:RPE_3587"/>
<dbReference type="eggNOG" id="COG0051">
    <property type="taxonomic scope" value="Bacteria"/>
</dbReference>
<dbReference type="HOGENOM" id="CLU_122625_1_3_5"/>
<dbReference type="OrthoDB" id="9804464at2"/>
<dbReference type="GO" id="GO:1990904">
    <property type="term" value="C:ribonucleoprotein complex"/>
    <property type="evidence" value="ECO:0007669"/>
    <property type="project" value="UniProtKB-KW"/>
</dbReference>
<dbReference type="GO" id="GO:0005840">
    <property type="term" value="C:ribosome"/>
    <property type="evidence" value="ECO:0007669"/>
    <property type="project" value="UniProtKB-KW"/>
</dbReference>
<dbReference type="GO" id="GO:0003735">
    <property type="term" value="F:structural constituent of ribosome"/>
    <property type="evidence" value="ECO:0007669"/>
    <property type="project" value="InterPro"/>
</dbReference>
<dbReference type="GO" id="GO:0000049">
    <property type="term" value="F:tRNA binding"/>
    <property type="evidence" value="ECO:0007669"/>
    <property type="project" value="UniProtKB-UniRule"/>
</dbReference>
<dbReference type="GO" id="GO:0006412">
    <property type="term" value="P:translation"/>
    <property type="evidence" value="ECO:0007669"/>
    <property type="project" value="UniProtKB-UniRule"/>
</dbReference>
<dbReference type="FunFam" id="3.30.70.600:FF:000001">
    <property type="entry name" value="30S ribosomal protein S10"/>
    <property type="match status" value="1"/>
</dbReference>
<dbReference type="Gene3D" id="3.30.70.600">
    <property type="entry name" value="Ribosomal protein S10 domain"/>
    <property type="match status" value="1"/>
</dbReference>
<dbReference type="HAMAP" id="MF_00508">
    <property type="entry name" value="Ribosomal_uS10"/>
    <property type="match status" value="1"/>
</dbReference>
<dbReference type="InterPro" id="IPR001848">
    <property type="entry name" value="Ribosomal_uS10"/>
</dbReference>
<dbReference type="InterPro" id="IPR018268">
    <property type="entry name" value="Ribosomal_uS10_CS"/>
</dbReference>
<dbReference type="InterPro" id="IPR027486">
    <property type="entry name" value="Ribosomal_uS10_dom"/>
</dbReference>
<dbReference type="InterPro" id="IPR036838">
    <property type="entry name" value="Ribosomal_uS10_dom_sf"/>
</dbReference>
<dbReference type="NCBIfam" id="NF001861">
    <property type="entry name" value="PRK00596.1"/>
    <property type="match status" value="1"/>
</dbReference>
<dbReference type="NCBIfam" id="TIGR01049">
    <property type="entry name" value="rpsJ_bact"/>
    <property type="match status" value="1"/>
</dbReference>
<dbReference type="PANTHER" id="PTHR11700">
    <property type="entry name" value="30S RIBOSOMAL PROTEIN S10 FAMILY MEMBER"/>
    <property type="match status" value="1"/>
</dbReference>
<dbReference type="Pfam" id="PF00338">
    <property type="entry name" value="Ribosomal_S10"/>
    <property type="match status" value="1"/>
</dbReference>
<dbReference type="PRINTS" id="PR00971">
    <property type="entry name" value="RIBOSOMALS10"/>
</dbReference>
<dbReference type="SMART" id="SM01403">
    <property type="entry name" value="Ribosomal_S10"/>
    <property type="match status" value="1"/>
</dbReference>
<dbReference type="SUPFAM" id="SSF54999">
    <property type="entry name" value="Ribosomal protein S10"/>
    <property type="match status" value="1"/>
</dbReference>
<dbReference type="PROSITE" id="PS00361">
    <property type="entry name" value="RIBOSOMAL_S10"/>
    <property type="match status" value="1"/>
</dbReference>
<keyword id="KW-0687">Ribonucleoprotein</keyword>
<keyword id="KW-0689">Ribosomal protein</keyword>
<sequence length="102" mass="11669">MNGQNIRIRLKAFDHRILDTSTREIVNTAKRTGAQVRGPIPLPTRIEKFTVNRSPHVDKKSREQFEMRTHKRLLDIVDPTPQTVDALMKLDLAAGVDVEIKL</sequence>
<comment type="function">
    <text evidence="1">Involved in the binding of tRNA to the ribosomes.</text>
</comment>
<comment type="subunit">
    <text evidence="1">Part of the 30S ribosomal subunit.</text>
</comment>
<comment type="similarity">
    <text evidence="1">Belongs to the universal ribosomal protein uS10 family.</text>
</comment>
<organism>
    <name type="scientific">Rhodopseudomonas palustris (strain BisA53)</name>
    <dbReference type="NCBI Taxonomy" id="316055"/>
    <lineage>
        <taxon>Bacteria</taxon>
        <taxon>Pseudomonadati</taxon>
        <taxon>Pseudomonadota</taxon>
        <taxon>Alphaproteobacteria</taxon>
        <taxon>Hyphomicrobiales</taxon>
        <taxon>Nitrobacteraceae</taxon>
        <taxon>Rhodopseudomonas</taxon>
    </lineage>
</organism>
<reference key="1">
    <citation type="submission" date="2006-09" db="EMBL/GenBank/DDBJ databases">
        <title>Complete sequence of Rhodopseudomonas palustris BisA53.</title>
        <authorList>
            <consortium name="US DOE Joint Genome Institute"/>
            <person name="Copeland A."/>
            <person name="Lucas S."/>
            <person name="Lapidus A."/>
            <person name="Barry K."/>
            <person name="Detter J.C."/>
            <person name="Glavina del Rio T."/>
            <person name="Hammon N."/>
            <person name="Israni S."/>
            <person name="Dalin E."/>
            <person name="Tice H."/>
            <person name="Pitluck S."/>
            <person name="Chain P."/>
            <person name="Malfatti S."/>
            <person name="Shin M."/>
            <person name="Vergez L."/>
            <person name="Schmutz J."/>
            <person name="Larimer F."/>
            <person name="Land M."/>
            <person name="Hauser L."/>
            <person name="Pelletier D.A."/>
            <person name="Kyrpides N."/>
            <person name="Kim E."/>
            <person name="Harwood C.S."/>
            <person name="Oda Y."/>
            <person name="Richardson P."/>
        </authorList>
    </citation>
    <scope>NUCLEOTIDE SEQUENCE [LARGE SCALE GENOMIC DNA]</scope>
    <source>
        <strain>BisA53</strain>
    </source>
</reference>
<proteinExistence type="inferred from homology"/>
<gene>
    <name evidence="1" type="primary">rpsJ</name>
    <name type="ordered locus">RPE_3587</name>
</gene>
<feature type="chain" id="PRO_1000015095" description="Small ribosomal subunit protein uS10">
    <location>
        <begin position="1"/>
        <end position="102"/>
    </location>
</feature>
<name>RS10_RHOP5</name>
<evidence type="ECO:0000255" key="1">
    <source>
        <dbReference type="HAMAP-Rule" id="MF_00508"/>
    </source>
</evidence>
<evidence type="ECO:0000305" key="2"/>
<accession>Q07KL7</accession>